<feature type="initiator methionine" description="Removed; by host" evidence="3">
    <location>
        <position position="1"/>
    </location>
</feature>
<feature type="chain" id="PRO_0000038095" description="Large envelope protein" evidence="3">
    <location>
        <begin position="2"/>
        <end position="400"/>
    </location>
</feature>
<feature type="topological domain" description="Intravirion; in internal conformation" evidence="3">
    <location>
        <begin position="2"/>
        <end position="253"/>
    </location>
</feature>
<feature type="topological domain" description="Virion surface; in external conformation" evidence="3">
    <location>
        <begin position="2"/>
        <end position="181"/>
    </location>
</feature>
<feature type="transmembrane region" description="Helical; Name=TM1; Note=In external conformation" evidence="3">
    <location>
        <begin position="182"/>
        <end position="202"/>
    </location>
</feature>
<feature type="topological domain" description="Intravirion; in external conformation" evidence="3">
    <location>
        <begin position="203"/>
        <end position="253"/>
    </location>
</feature>
<feature type="transmembrane region" description="Helical; Name=TM2" evidence="3">
    <location>
        <begin position="254"/>
        <end position="274"/>
    </location>
</feature>
<feature type="topological domain" description="Virion surface" evidence="3">
    <location>
        <begin position="275"/>
        <end position="348"/>
    </location>
</feature>
<feature type="transmembrane region" description="Helical" evidence="3">
    <location>
        <begin position="349"/>
        <end position="369"/>
    </location>
</feature>
<feature type="topological domain" description="Intravirion" evidence="3">
    <location>
        <begin position="370"/>
        <end position="375"/>
    </location>
</feature>
<feature type="transmembrane region" description="Helical; Name=TM3" evidence="3">
    <location>
        <begin position="376"/>
        <end position="398"/>
    </location>
</feature>
<feature type="topological domain" description="Virion surface" evidence="3">
    <location>
        <begin position="399"/>
        <end position="400"/>
    </location>
</feature>
<feature type="region of interest" description="Pre-S" evidence="3">
    <location>
        <begin position="2"/>
        <end position="174"/>
    </location>
</feature>
<feature type="region of interest" description="Pre-S1" evidence="3">
    <location>
        <begin position="2"/>
        <end position="119"/>
    </location>
</feature>
<feature type="region of interest" description="Disordered" evidence="4">
    <location>
        <begin position="84"/>
        <end position="117"/>
    </location>
</feature>
<feature type="region of interest" description="Pre-S2" evidence="3">
    <location>
        <begin position="120"/>
        <end position="174"/>
    </location>
</feature>
<feature type="lipid moiety-binding region" description="N-myristoyl glycine; by host" evidence="3">
    <location>
        <position position="2"/>
    </location>
</feature>
<feature type="glycosylation site" description="N-linked (GlcNAc...) asparagine; by host" evidence="3">
    <location>
        <position position="320"/>
    </location>
</feature>
<feature type="splice variant" id="VSP_031419" description="In isoform S." evidence="5">
    <location>
        <begin position="1"/>
        <end position="174"/>
    </location>
</feature>
<feature type="splice variant" id="VSP_031420" description="In isoform M." evidence="5">
    <location>
        <begin position="1"/>
        <end position="119"/>
    </location>
</feature>
<feature type="modified residue" description="N-acetylmethionine" evidence="5">
    <location sequence="Q05496-2">
        <position position="1"/>
    </location>
</feature>
<feature type="glycosylation site" description="N-linked (GlcNAc...) asparagine" evidence="5">
    <location sequence="Q05496-2">
        <position position="4"/>
    </location>
</feature>
<proteinExistence type="evidence at protein level"/>
<organism>
    <name type="scientific">Hepatitis B virus genotype F2 (isolate Brazil/w4B)</name>
    <name type="common">HBV-F</name>
    <dbReference type="NCBI Taxonomy" id="45410"/>
    <lineage>
        <taxon>Viruses</taxon>
        <taxon>Riboviria</taxon>
        <taxon>Pararnavirae</taxon>
        <taxon>Artverviricota</taxon>
        <taxon>Revtraviricetes</taxon>
        <taxon>Blubervirales</taxon>
        <taxon>Hepadnaviridae</taxon>
        <taxon>Orthohepadnavirus</taxon>
        <taxon>Hepatitis B virus</taxon>
    </lineage>
</organism>
<accession>Q05496</accession>
<keyword id="KW-0007">Acetylation</keyword>
<keyword id="KW-0024">Alternative initiation</keyword>
<keyword id="KW-0025">Alternative splicing</keyword>
<keyword id="KW-1166">Caveolin-mediated endocytosis of virus by host</keyword>
<keyword id="KW-1170">Fusion of virus membrane with host endosomal membrane</keyword>
<keyword id="KW-1168">Fusion of virus membrane with host membrane</keyword>
<keyword id="KW-0325">Glycoprotein</keyword>
<keyword id="KW-0945">Host-virus interaction</keyword>
<keyword id="KW-0449">Lipoprotein</keyword>
<keyword id="KW-0472">Membrane</keyword>
<keyword id="KW-0519">Myristate</keyword>
<keyword id="KW-0812">Transmembrane</keyword>
<keyword id="KW-1133">Transmembrane helix</keyword>
<keyword id="KW-1161">Viral attachment to host cell</keyword>
<keyword id="KW-0261">Viral envelope protein</keyword>
<keyword id="KW-1162">Viral penetration into host cytoplasm</keyword>
<keyword id="KW-0946">Virion</keyword>
<keyword id="KW-1164">Virus endocytosis by host</keyword>
<keyword id="KW-1160">Virus entry into host cell</keyword>
<comment type="function">
    <text evidence="3">The large envelope protein exists in two topological conformations, one which is termed 'external' or Le-HBsAg and the other 'internal' or Li-HBsAg. In its external conformation the protein attaches the virus to cell receptors and thereby initiating infection. This interaction determines the species specificity and liver tropism. This attachment induces virion internalization predominantly through caveolin-mediated endocytosis. The large envelope protein also assures fusion between virion membrane and endosomal membrane. In its internal conformation the protein plays a role in virion morphogenesis and mediates the contact with the nucleocapsid like a matrix protein.</text>
</comment>
<comment type="function">
    <text evidence="3">The middle envelope protein plays an important role in the budding of the virion. It is involved in the induction of budding in a nucleocapsid independent way. In this process the majority of envelope proteins bud to form subviral lipoprotein particles of 22 nm of diameter that do not contain a nucleocapsid.</text>
</comment>
<comment type="subunit">
    <molecule>Isoform L</molecule>
    <text evidence="2">In its internal form (Li-HBsAg), interacts with the capsid protein and with the isoform S. Interacts with host chaperone CANX.</text>
</comment>
<comment type="subunit">
    <molecule>Isoform M</molecule>
    <text evidence="2">Associates with host chaperone CANX through its pre-S2 N glycan; this association may be essential for isoform M proper secretion.</text>
</comment>
<comment type="subunit">
    <molecule>Isoform S</molecule>
    <text evidence="2">Interacts with isoform L. Interacts with the antigens of satellite virus HDV (HDVAgs); this interaction is required for encapsidation of HDV genomic RNA.</text>
</comment>
<comment type="subcellular location">
    <subcellularLocation>
        <location evidence="3">Virion membrane</location>
    </subcellularLocation>
</comment>
<comment type="alternative products">
    <event type="alternative splicing"/>
    <event type="alternative initiation"/>
    <isoform>
        <id>Q05496-1</id>
        <name>L</name>
        <name>Large envelope protein</name>
        <name>LHB</name>
        <name>L-HBsAg</name>
        <sequence type="displayed"/>
    </isoform>
    <isoform>
        <id>Q05496-2</id>
        <name>M</name>
        <name>Middle envelope protein</name>
        <name>MHB</name>
        <name>M-HBsAg</name>
        <sequence type="described" ref="VSP_031420"/>
    </isoform>
    <isoform>
        <id>Q05496-3</id>
        <name>S</name>
        <name>Small envelope protein</name>
        <name>SHB</name>
        <name>S-HBsAg</name>
        <sequence type="described" ref="VSP_031419"/>
    </isoform>
</comment>
<comment type="domain">
    <text evidence="3">The large envelope protein is synthesized with the pre-S region at the cytosolic side of the endoplasmic reticulum and, hence will be within the virion after budding. Therefore the pre-S region is not N-glycosylated. Later a post-translational translocation of N-terminal pre-S and TM1 domains occur in about 50% of proteins at the virion surface. These molecules change their topology by an unknown mechanism, resulting in exposure of pre-S region at virion surface. For isoform M in contrast, the pre-S2 region is translocated cotranslationally to the endoplasmic reticulum lumen and is N-glycosylated.</text>
</comment>
<comment type="PTM">
    <text evidence="1 3">Isoform M is N-terminally acetylated by host at a ratio of 90%, and N-glycosylated by host at the pre-S2 region.</text>
</comment>
<comment type="PTM">
    <text evidence="3">Myristoylated.</text>
</comment>
<comment type="biotechnology">
    <text>Systematic vaccination of individuals at risk of exposure to the virus has been the main method of controlling the morbidity and mortality associated with hepatitis B. The first hepatitis B vaccine was manufactured by the purification and inactivation of HBsAg obtained from the plasma of chronic hepatitis B virus carriers. The vaccine is now produced by recombinant DNA techniques and expression of the S isoform in yeast cells. The pre-S region do not seem to induce strong enough antigenic response.</text>
</comment>
<comment type="similarity">
    <text evidence="3">Belongs to the orthohepadnavirus major surface antigen family.</text>
</comment>
<sequence>MGAPLSTTRRGMGQNLSVPNPLGFFPDHQLDPLFRANSSSPDWDFNTNKDSWPMANKVGVGGYGPGFTPPHGGLLGWSPQAQGVLTTLPADPPPASTNRRSGRKPTPVSPPLRDTHPQAMQWNSTQFHQALLDPRVRALYFPAGGSSSGTQNPAPTIASLTSSIFSKTGGPAMNMDNITSGLLGPLLVLQAVCFLLTKILTIPQSLDSWWTSLNFLGGLPGCPGQNSQSPTSNHLPTSCPPTCPGYRWMCLRRFIIFLFILLLCLIFLLVLLDYQGMLPVCPLLPGSTTTSTGPCKTCTTLAQGTSMFPSCCCSKPSDGNCTCIPIPSSWALGKYLWEWASARFSWLSLLVQFVQWCVGLSPTVWLLVIWMIWYWGPNLCSILSPFIPLLPIFCYLWVSI</sequence>
<organismHost>
    <name type="scientific">Homo sapiens</name>
    <name type="common">Human</name>
    <dbReference type="NCBI Taxonomy" id="9606"/>
</organismHost>
<organismHost>
    <name type="scientific">Pan troglodytes</name>
    <name type="common">Chimpanzee</name>
    <dbReference type="NCBI Taxonomy" id="9598"/>
</organismHost>
<protein>
    <recommendedName>
        <fullName evidence="3">Large envelope protein</fullName>
    </recommendedName>
    <alternativeName>
        <fullName evidence="3">L glycoprotein</fullName>
    </alternativeName>
    <alternativeName>
        <fullName evidence="3">L-HBsAg</fullName>
        <shortName evidence="3">LHB</shortName>
    </alternativeName>
    <alternativeName>
        <fullName evidence="3">Large S protein</fullName>
    </alternativeName>
    <alternativeName>
        <fullName evidence="3">Large surface protein</fullName>
    </alternativeName>
    <alternativeName>
        <fullName evidence="3">Major surface antigen</fullName>
    </alternativeName>
</protein>
<name>HBSAG_HBVF1</name>
<evidence type="ECO:0000250" key="1">
    <source>
        <dbReference type="UniProtKB" id="P03138"/>
    </source>
</evidence>
<evidence type="ECO:0000250" key="2">
    <source>
        <dbReference type="UniProtKB" id="P03141"/>
    </source>
</evidence>
<evidence type="ECO:0000255" key="3">
    <source>
        <dbReference type="HAMAP-Rule" id="MF_04075"/>
    </source>
</evidence>
<evidence type="ECO:0000256" key="4">
    <source>
        <dbReference type="SAM" id="MobiDB-lite"/>
    </source>
</evidence>
<evidence type="ECO:0000305" key="5"/>
<gene>
    <name evidence="3" type="primary">S</name>
</gene>
<reference key="1">
    <citation type="journal article" date="1993" name="J. Gen. Virol.">
        <title>Identification of a new hepatitis B virus (HBV) genotype from Brazil that expresses HBV surface antigen subtype adw4.</title>
        <authorList>
            <person name="Naumann H."/>
            <person name="Schaefer S."/>
            <person name="Yoshida C.F.T."/>
            <person name="Gaspar A.M.C."/>
            <person name="Repp R."/>
            <person name="Gerlich W.H."/>
        </authorList>
    </citation>
    <scope>NUCLEOTIDE SEQUENCE [GENOMIC DNA]</scope>
</reference>
<reference key="2">
    <citation type="journal article" date="1996" name="Intervirology">
        <title>Functions of the large hepatitis B virus surface protein in viral particle morphogenesis.</title>
        <authorList>
            <person name="Bruss V."/>
            <person name="Gerhardt E."/>
            <person name="Vieluf K."/>
            <person name="Wunderlich G."/>
        </authorList>
    </citation>
    <scope>REVIEW</scope>
</reference>
<reference key="3">
    <citation type="journal article" date="1998" name="Adv. Exp. Med. Biol.">
        <title>Role of glycan processing in hepatitis B virus envelope protein trafficking.</title>
        <authorList>
            <person name="Block T.M."/>
            <person name="Lu X."/>
            <person name="Mehta A."/>
            <person name="Park J."/>
            <person name="Blumberg B.S."/>
            <person name="Dwek R."/>
        </authorList>
    </citation>
    <scope>REVIEW</scope>
</reference>
<reference key="4">
    <citation type="journal article" date="2004" name="Virus Res.">
        <title>Envelopment of the hepatitis B virus nucleocapsid.</title>
        <authorList>
            <person name="Bruss V."/>
        </authorList>
    </citation>
    <scope>REVIEW</scope>
</reference>
<reference key="5">
    <citation type="journal article" date="2006" name="Cancer Sci.">
        <title>Hepatitis B virus pre-S mutants, endoplasmic reticulum stress and hepatocarcinogenesis.</title>
        <authorList>
            <person name="Wang H.C."/>
            <person name="Huang W."/>
            <person name="Lai M.D."/>
            <person name="Su I.J."/>
        </authorList>
    </citation>
    <scope>REVIEW</scope>
</reference>
<dbReference type="EMBL" id="X69798">
    <property type="protein sequence ID" value="CAA49455.1"/>
    <property type="molecule type" value="Genomic_DNA"/>
</dbReference>
<dbReference type="PIR" id="JQ2230">
    <property type="entry name" value="JQ2230"/>
</dbReference>
<dbReference type="SMR" id="Q05496"/>
<dbReference type="GlyCosmos" id="Q05496">
    <property type="glycosylation" value="2 sites, No reported glycans"/>
</dbReference>
<dbReference type="Proteomes" id="UP000008284">
    <property type="component" value="Segment"/>
</dbReference>
<dbReference type="GO" id="GO:0016020">
    <property type="term" value="C:membrane"/>
    <property type="evidence" value="ECO:0007669"/>
    <property type="project" value="UniProtKB-UniRule"/>
</dbReference>
<dbReference type="GO" id="GO:0019031">
    <property type="term" value="C:viral envelope"/>
    <property type="evidence" value="ECO:0007669"/>
    <property type="project" value="UniProtKB-KW"/>
</dbReference>
<dbReference type="GO" id="GO:0055036">
    <property type="term" value="C:virion membrane"/>
    <property type="evidence" value="ECO:0007669"/>
    <property type="project" value="UniProtKB-SubCell"/>
</dbReference>
<dbReference type="GO" id="GO:0075513">
    <property type="term" value="P:caveolin-mediated endocytosis of virus by host cell"/>
    <property type="evidence" value="ECO:0007669"/>
    <property type="project" value="UniProtKB-KW"/>
</dbReference>
<dbReference type="GO" id="GO:0039654">
    <property type="term" value="P:fusion of virus membrane with host endosome membrane"/>
    <property type="evidence" value="ECO:0007669"/>
    <property type="project" value="UniProtKB-KW"/>
</dbReference>
<dbReference type="GO" id="GO:0019062">
    <property type="term" value="P:virion attachment to host cell"/>
    <property type="evidence" value="ECO:0007669"/>
    <property type="project" value="UniProtKB-UniRule"/>
</dbReference>
<dbReference type="HAMAP" id="MF_04075">
    <property type="entry name" value="HBV_HBSAG"/>
    <property type="match status" value="1"/>
</dbReference>
<dbReference type="InterPro" id="IPR000349">
    <property type="entry name" value="HBV_HBSAG"/>
</dbReference>
<dbReference type="Pfam" id="PF00695">
    <property type="entry name" value="vMSA"/>
    <property type="match status" value="1"/>
</dbReference>